<sequence length="80" mass="8580">MESRGAADSQDPSAFLSGITGASVTVKLNSGVVYKGELQSIDGYMNIALEKTQEFVNGKLRKSYGDVFVRGNNVLYISAD</sequence>
<dbReference type="EMBL" id="GG704912">
    <property type="protein sequence ID" value="EAS31554.3"/>
    <property type="molecule type" value="Genomic_DNA"/>
</dbReference>
<dbReference type="RefSeq" id="XP_001243137.1">
    <property type="nucleotide sequence ID" value="XM_001243136.2"/>
</dbReference>
<dbReference type="SMR" id="Q1DRN0"/>
<dbReference type="FunCoup" id="Q1DRN0">
    <property type="interactions" value="765"/>
</dbReference>
<dbReference type="STRING" id="246410.Q1DRN0"/>
<dbReference type="GeneID" id="4561411"/>
<dbReference type="KEGG" id="cim:CIMG_07033"/>
<dbReference type="VEuPathDB" id="FungiDB:CIMG_07033"/>
<dbReference type="InParanoid" id="Q1DRN0"/>
<dbReference type="OMA" id="EQTVEYV"/>
<dbReference type="OrthoDB" id="268799at2759"/>
<dbReference type="Proteomes" id="UP000001261">
    <property type="component" value="Unassembled WGS sequence"/>
</dbReference>
<dbReference type="GO" id="GO:0005730">
    <property type="term" value="C:nucleolus"/>
    <property type="evidence" value="ECO:0007669"/>
    <property type="project" value="TreeGrafter"/>
</dbReference>
<dbReference type="GO" id="GO:0000932">
    <property type="term" value="C:P-body"/>
    <property type="evidence" value="ECO:0007669"/>
    <property type="project" value="TreeGrafter"/>
</dbReference>
<dbReference type="GO" id="GO:0005732">
    <property type="term" value="C:sno(s)RNA-containing ribonucleoprotein complex"/>
    <property type="evidence" value="ECO:0007669"/>
    <property type="project" value="TreeGrafter"/>
</dbReference>
<dbReference type="GO" id="GO:0005681">
    <property type="term" value="C:spliceosomal complex"/>
    <property type="evidence" value="ECO:0007669"/>
    <property type="project" value="UniProtKB-KW"/>
</dbReference>
<dbReference type="GO" id="GO:0046540">
    <property type="term" value="C:U4/U6 x U5 tri-snRNP complex"/>
    <property type="evidence" value="ECO:0007669"/>
    <property type="project" value="TreeGrafter"/>
</dbReference>
<dbReference type="GO" id="GO:0005688">
    <property type="term" value="C:U6 snRNP"/>
    <property type="evidence" value="ECO:0007669"/>
    <property type="project" value="TreeGrafter"/>
</dbReference>
<dbReference type="GO" id="GO:0003723">
    <property type="term" value="F:RNA binding"/>
    <property type="evidence" value="ECO:0007669"/>
    <property type="project" value="UniProtKB-KW"/>
</dbReference>
<dbReference type="GO" id="GO:0030490">
    <property type="term" value="P:maturation of SSU-rRNA"/>
    <property type="evidence" value="ECO:0007669"/>
    <property type="project" value="TreeGrafter"/>
</dbReference>
<dbReference type="GO" id="GO:0000398">
    <property type="term" value="P:mRNA splicing, via spliceosome"/>
    <property type="evidence" value="ECO:0007669"/>
    <property type="project" value="InterPro"/>
</dbReference>
<dbReference type="GO" id="GO:0008033">
    <property type="term" value="P:tRNA processing"/>
    <property type="evidence" value="ECO:0007669"/>
    <property type="project" value="UniProtKB-KW"/>
</dbReference>
<dbReference type="CDD" id="cd01726">
    <property type="entry name" value="LSm6"/>
    <property type="match status" value="1"/>
</dbReference>
<dbReference type="FunFam" id="2.30.30.100:FF:000037">
    <property type="entry name" value="U6 snRNA-associated Sm-like protein LSm6"/>
    <property type="match status" value="1"/>
</dbReference>
<dbReference type="Gene3D" id="2.30.30.100">
    <property type="match status" value="1"/>
</dbReference>
<dbReference type="InterPro" id="IPR016487">
    <property type="entry name" value="Lsm6/sSmF"/>
</dbReference>
<dbReference type="InterPro" id="IPR010920">
    <property type="entry name" value="LSM_dom_sf"/>
</dbReference>
<dbReference type="InterPro" id="IPR047575">
    <property type="entry name" value="Sm"/>
</dbReference>
<dbReference type="InterPro" id="IPR001163">
    <property type="entry name" value="Sm_dom_euk/arc"/>
</dbReference>
<dbReference type="PANTHER" id="PTHR11021">
    <property type="entry name" value="SMALL NUCLEAR RIBONUCLEOPROTEIN F SNRNP-F"/>
    <property type="match status" value="1"/>
</dbReference>
<dbReference type="PANTHER" id="PTHR11021:SF1">
    <property type="entry name" value="U6 SNRNA-ASSOCIATED SM-LIKE PROTEIN LSM6"/>
    <property type="match status" value="1"/>
</dbReference>
<dbReference type="Pfam" id="PF01423">
    <property type="entry name" value="LSM"/>
    <property type="match status" value="1"/>
</dbReference>
<dbReference type="PIRSF" id="PIRSF006609">
    <property type="entry name" value="snRNP_SmF"/>
    <property type="match status" value="1"/>
</dbReference>
<dbReference type="SMART" id="SM00651">
    <property type="entry name" value="Sm"/>
    <property type="match status" value="1"/>
</dbReference>
<dbReference type="SUPFAM" id="SSF50182">
    <property type="entry name" value="Sm-like ribonucleoproteins"/>
    <property type="match status" value="1"/>
</dbReference>
<dbReference type="PROSITE" id="PS52002">
    <property type="entry name" value="SM"/>
    <property type="match status" value="1"/>
</dbReference>
<organism>
    <name type="scientific">Coccidioides immitis (strain RS)</name>
    <name type="common">Valley fever fungus</name>
    <dbReference type="NCBI Taxonomy" id="246410"/>
    <lineage>
        <taxon>Eukaryota</taxon>
        <taxon>Fungi</taxon>
        <taxon>Dikarya</taxon>
        <taxon>Ascomycota</taxon>
        <taxon>Pezizomycotina</taxon>
        <taxon>Eurotiomycetes</taxon>
        <taxon>Eurotiomycetidae</taxon>
        <taxon>Onygenales</taxon>
        <taxon>Onygenaceae</taxon>
        <taxon>Coccidioides</taxon>
    </lineage>
</organism>
<keyword id="KW-0963">Cytoplasm</keyword>
<keyword id="KW-0507">mRNA processing</keyword>
<keyword id="KW-0508">mRNA splicing</keyword>
<keyword id="KW-0539">Nucleus</keyword>
<keyword id="KW-1185">Reference proteome</keyword>
<keyword id="KW-0687">Ribonucleoprotein</keyword>
<keyword id="KW-0694">RNA-binding</keyword>
<keyword id="KW-0698">rRNA processing</keyword>
<keyword id="KW-0747">Spliceosome</keyword>
<keyword id="KW-0819">tRNA processing</keyword>
<comment type="function">
    <text evidence="1">Component of LSm protein complexes, which are involved in RNA processing and may function in a chaperone-like manner, facilitating the efficient association of RNA processing factors with their substrates. Component of the cytoplasmic LSM1-LSM7 complex, which is thought to be involved in mRNA degradation by activating the decapping step in the 5'-to-3' mRNA decay pathway. Component of the nuclear LSM2-LSM8 complex, which is involved in splicing of nuclear mRNAs. LSM2-LSM8 associates with multiple snRNP complexes containing the U6 snRNA (U4/U6 di-snRNP, spliceosomal U4/U6.U5 tri-snRNP, and free U6 snRNP). It binds directly to the 3'-terminal U-tract of U6 snRNA and plays a role in the biogenesis and stability of the U6 snRNP and U4/U6 snRNP complexes. LSM2-LSM8 probably also is involved degradation of nuclear pre-mRNA by targeting them for decapping, and in processing of pre-tRNAs, pre-rRNAs and U3 snoRNA (By similarity).</text>
</comment>
<comment type="subunit">
    <text evidence="1">Component of the heptameric LSM1-LSM7 complex, which consists of LSM1, LSM2, LSM3, LSM4, LSM5, LSM6 and LSM7. Component of the heptameric LSM2-LSM8 complex, which consists of LSM2, LSM3, LSM4, LSM5, LSM6, LSM7 and LSM8. The LSm subunits form a seven-membered ring structure with a doughnut shape (By similarity).</text>
</comment>
<comment type="subcellular location">
    <subcellularLocation>
        <location evidence="1">Cytoplasm</location>
    </subcellularLocation>
    <subcellularLocation>
        <location evidence="1">Nucleus</location>
    </subcellularLocation>
</comment>
<comment type="similarity">
    <text evidence="3">Belongs to the snRNP Sm proteins family. SmF/LSm6 subfamily.</text>
</comment>
<feature type="chain" id="PRO_0000333593" description="U6 snRNA-associated Sm-like protein LSm6">
    <location>
        <begin position="1"/>
        <end position="80"/>
    </location>
</feature>
<feature type="domain" description="Sm" evidence="2">
    <location>
        <begin position="11"/>
        <end position="80"/>
    </location>
</feature>
<name>LSM6_COCIM</name>
<evidence type="ECO:0000250" key="1"/>
<evidence type="ECO:0000255" key="2">
    <source>
        <dbReference type="PROSITE-ProRule" id="PRU01346"/>
    </source>
</evidence>
<evidence type="ECO:0000305" key="3"/>
<proteinExistence type="inferred from homology"/>
<reference key="1">
    <citation type="journal article" date="2009" name="Genome Res.">
        <title>Comparative genomic analyses of the human fungal pathogens Coccidioides and their relatives.</title>
        <authorList>
            <person name="Sharpton T.J."/>
            <person name="Stajich J.E."/>
            <person name="Rounsley S.D."/>
            <person name="Gardner M.J."/>
            <person name="Wortman J.R."/>
            <person name="Jordar V.S."/>
            <person name="Maiti R."/>
            <person name="Kodira C.D."/>
            <person name="Neafsey D.E."/>
            <person name="Zeng Q."/>
            <person name="Hung C.-Y."/>
            <person name="McMahan C."/>
            <person name="Muszewska A."/>
            <person name="Grynberg M."/>
            <person name="Mandel M.A."/>
            <person name="Kellner E.M."/>
            <person name="Barker B.M."/>
            <person name="Galgiani J.N."/>
            <person name="Orbach M.J."/>
            <person name="Kirkland T.N."/>
            <person name="Cole G.T."/>
            <person name="Henn M.R."/>
            <person name="Birren B.W."/>
            <person name="Taylor J.W."/>
        </authorList>
    </citation>
    <scope>NUCLEOTIDE SEQUENCE [LARGE SCALE GENOMIC DNA]</scope>
    <source>
        <strain>RS</strain>
    </source>
</reference>
<reference key="2">
    <citation type="journal article" date="2010" name="Genome Res.">
        <title>Population genomic sequencing of Coccidioides fungi reveals recent hybridization and transposon control.</title>
        <authorList>
            <person name="Neafsey D.E."/>
            <person name="Barker B.M."/>
            <person name="Sharpton T.J."/>
            <person name="Stajich J.E."/>
            <person name="Park D.J."/>
            <person name="Whiston E."/>
            <person name="Hung C.-Y."/>
            <person name="McMahan C."/>
            <person name="White J."/>
            <person name="Sykes S."/>
            <person name="Heiman D."/>
            <person name="Young S."/>
            <person name="Zeng Q."/>
            <person name="Abouelleil A."/>
            <person name="Aftuck L."/>
            <person name="Bessette D."/>
            <person name="Brown A."/>
            <person name="FitzGerald M."/>
            <person name="Lui A."/>
            <person name="Macdonald J.P."/>
            <person name="Priest M."/>
            <person name="Orbach M.J."/>
            <person name="Galgiani J.N."/>
            <person name="Kirkland T.N."/>
            <person name="Cole G.T."/>
            <person name="Birren B.W."/>
            <person name="Henn M.R."/>
            <person name="Taylor J.W."/>
            <person name="Rounsley S.D."/>
        </authorList>
    </citation>
    <scope>GENOME REANNOTATION</scope>
    <source>
        <strain>RS</strain>
    </source>
</reference>
<protein>
    <recommendedName>
        <fullName>U6 snRNA-associated Sm-like protein LSm6</fullName>
    </recommendedName>
</protein>
<gene>
    <name type="primary">LSM6</name>
    <name type="ORF">CIMG_07033</name>
</gene>
<accession>Q1DRN0</accession>
<accession>J3KA69</accession>